<gene>
    <name evidence="17" type="primary">Tex101</name>
</gene>
<sequence>MGACRIQYVLLIFLLIASRWTLVQNTYCQVSQTLSLEDDPGRTFNWTSKAEQCNPGELCQETVLLIKADGTRTVVLASKSCVSQGGEAVTFIQYTAPPGLVAISYSNYCNDSLCNNKDSLASVWRVPETTATSNMSGTRHCPTCVALGSCSSAPSMPCANGTTQCYQGRLEFSGGGMDATVQVKGCTTTIGCRLMAMIDSVGPMTVKETCSYQSFLQPRKAEIGASQMPTSLWVLELLFPLLLLPLTHFP</sequence>
<keyword id="KW-0002">3D-structure</keyword>
<keyword id="KW-1003">Cell membrane</keyword>
<keyword id="KW-0968">Cytoplasmic vesicle</keyword>
<keyword id="KW-0903">Direct protein sequencing</keyword>
<keyword id="KW-0325">Glycoprotein</keyword>
<keyword id="KW-0336">GPI-anchor</keyword>
<keyword id="KW-0449">Lipoprotein</keyword>
<keyword id="KW-0472">Membrane</keyword>
<keyword id="KW-1185">Reference proteome</keyword>
<keyword id="KW-0964">Secreted</keyword>
<keyword id="KW-0732">Signal</keyword>
<accession>Q9JMI7</accession>
<proteinExistence type="evidence at protein level"/>
<feature type="signal peptide" evidence="4">
    <location>
        <begin position="1"/>
        <end position="25"/>
    </location>
</feature>
<feature type="chain" id="PRO_0000247623" description="Testis-expressed protein 101">
    <location>
        <begin position="26"/>
        <end position="224"/>
    </location>
</feature>
<feature type="propeptide" id="PRO_0000247624" description="Removed in mature form" evidence="3">
    <location>
        <begin position="225"/>
        <end position="250"/>
    </location>
</feature>
<feature type="domain" description="UPAR/Ly6">
    <location>
        <begin position="141"/>
        <end position="215"/>
    </location>
</feature>
<feature type="lipid moiety-binding region" description="GPI-anchor amidated glycine" evidence="3">
    <location>
        <position position="224"/>
    </location>
</feature>
<feature type="glycosylation site" description="N-linked (GlcNAc...) asparagine" evidence="3">
    <location>
        <position position="45"/>
    </location>
</feature>
<feature type="glycosylation site" description="N-linked (GlcNAc...) asparagine" evidence="3">
    <location>
        <position position="110"/>
    </location>
</feature>
<feature type="glycosylation site" description="N-linked (GlcNAc...) asparagine" evidence="3">
    <location>
        <position position="134"/>
    </location>
</feature>
<feature type="glycosylation site" description="N-linked (GlcNAc...) asparagine" evidence="3">
    <location>
        <position position="160"/>
    </location>
</feature>
<feature type="strand" evidence="18">
    <location>
        <begin position="27"/>
        <end position="29"/>
    </location>
</feature>
<feature type="strand" evidence="18">
    <location>
        <begin position="31"/>
        <end position="38"/>
    </location>
</feature>
<feature type="helix" evidence="18">
    <location>
        <begin position="40"/>
        <end position="43"/>
    </location>
</feature>
<feature type="strand" evidence="18">
    <location>
        <begin position="50"/>
        <end position="52"/>
    </location>
</feature>
<feature type="strand" evidence="18">
    <location>
        <begin position="58"/>
        <end position="67"/>
    </location>
</feature>
<feature type="strand" evidence="18">
    <location>
        <begin position="73"/>
        <end position="84"/>
    </location>
</feature>
<feature type="strand" evidence="18">
    <location>
        <begin position="89"/>
        <end position="95"/>
    </location>
</feature>
<feature type="strand" evidence="18">
    <location>
        <begin position="97"/>
        <end position="99"/>
    </location>
</feature>
<feature type="strand" evidence="18">
    <location>
        <begin position="101"/>
        <end position="109"/>
    </location>
</feature>
<feature type="turn" evidence="18">
    <location>
        <begin position="121"/>
        <end position="123"/>
    </location>
</feature>
<feature type="strand" evidence="18">
    <location>
        <begin position="140"/>
        <end position="142"/>
    </location>
</feature>
<feature type="strand" evidence="18">
    <location>
        <begin position="144"/>
        <end position="148"/>
    </location>
</feature>
<feature type="strand" evidence="18">
    <location>
        <begin position="155"/>
        <end position="157"/>
    </location>
</feature>
<feature type="strand" evidence="18">
    <location>
        <begin position="164"/>
        <end position="174"/>
    </location>
</feature>
<feature type="strand" evidence="18">
    <location>
        <begin position="179"/>
        <end position="189"/>
    </location>
</feature>
<feature type="turn" evidence="18">
    <location>
        <begin position="194"/>
        <end position="197"/>
    </location>
</feature>
<feature type="strand" evidence="18">
    <location>
        <begin position="204"/>
        <end position="214"/>
    </location>
</feature>
<name>TX101_MOUSE</name>
<comment type="function">
    <text evidence="1 13 14">Plays a role in fertilization by controlling binding of sperm to zona pellucida and migration of spermatozoa into the oviduct probably through molecule adhesion ADAM3 (PubMed:23633567, PubMed:23969891). May play a role in signal transduction and promote protein tyrosine phosphorylation (By similarity).</text>
</comment>
<comment type="subunit">
    <text evidence="8 10 12 13 14">Interacts with VAMP3 (PubMed:16678124). Interacts with LY6K (PubMed:18503752). Interacts with DPEP3; co-localized on the cell surface of spermatocytes, spermatids, and testicular spermatozoa, co-localized only in cytoplasmic droplets of caput and corpus epididymal sperm (PubMed:21724266). Interacts with ADAM3; co-localized on sperm surface (PubMed:23633567, PubMed:23969891). Interacts with ADAM5 (PubMed:23969891).</text>
</comment>
<comment type="subcellular location">
    <subcellularLocation>
        <location evidence="4 7 8 10 11 12 16">Cell membrane</location>
        <topology evidence="9">Lipid-anchor</topology>
        <topology evidence="9">GPI-anchor</topology>
    </subcellularLocation>
    <subcellularLocation>
        <location evidence="6 10">Membrane raft</location>
    </subcellularLocation>
    <subcellularLocation>
        <location evidence="16">Cytoplasmic vesicle</location>
        <location evidence="16">Secretory vesicle</location>
        <location evidence="16">Acrosome</location>
    </subcellularLocation>
    <subcellularLocation>
        <location evidence="10 11 12">Secreted</location>
    </subcellularLocation>
    <subcellularLocation>
        <location evidence="12 16">Cytoplasmic vesicle</location>
    </subcellularLocation>
    <text evidence="11">Located on plasma membrane of spermatocytes, round and elongated spermatids, and testicular spermatozoa.</text>
</comment>
<comment type="tissue specificity">
    <text evidence="4 5 6 7 11 13 14">Detected in testis and ovary (PubMed:11207211, PubMed:15689535, PubMed:15917346, PubMed:16388701, PubMed:23969891). Expressed in spermatocytes, spermatids and testicular spermatozoa, but not in spermatogonia or interstitial cells (PubMed:18620756). Expressed abundantly in testicular germ cells (TGCs) but mostly disappeared from epididymal spermatozoa (PubMed:23633567).</text>
</comment>
<comment type="developmental stage">
    <text evidence="4 5 7 8">Detected in prospermatogonia in embryos after 14 days of development and until 8 days after birth. Not detectable in spermatogonia from over 10 day old animals. Highly expressed in spermatocytes and spermatids from 12-28 day old animals, but not in spermatogonia. Detected in embryonic ovary after 14 days of development and in newly born animals. Expression is much reduced in ovary from 4 day old animals, and not detectable thereafter. Not detectable in oocytes that are surrounded by follicular cells.</text>
</comment>
<comment type="PTM">
    <text evidence="9 11">N-glycosylated; by high mannose and/or biantennary complex and/or certain types of hybrid oligosaccharides; possesses different oligosaccharides chains according to its subcellular localization in the testis.</text>
</comment>
<comment type="PTM">
    <text evidence="7 13 15">Sheds from membrane raft by ACE and released from the cell surface of epididymal sperm while it passes through the caput epididymis leading to disappearance of TEX101 on spermatozoa; is essential to produce fertile spermatozoa.</text>
</comment>
<comment type="disruption phenotype">
    <text evidence="14 15">Knockout Tex101 mice are viable and show no overt developmental abnormalities. Males are infertile.</text>
</comment>
<protein>
    <recommendedName>
        <fullName evidence="2">Testis-expressed protein 101</fullName>
    </recommendedName>
    <alternativeName>
        <fullName>TES101-reactive protein</fullName>
        <shortName>TES101RP</shortName>
    </alternativeName>
</protein>
<reference key="1">
    <citation type="journal article" date="2001" name="Biol. Reprod.">
        <title>Identification, cloning, and initial characterization of a novel mouse testicular germ cell-specific antigen.</title>
        <authorList>
            <person name="Kurita A."/>
            <person name="Takizawa T."/>
            <person name="Takayama T."/>
            <person name="Totsukawa K."/>
            <person name="Matsubara S."/>
            <person name="Shibahara H."/>
            <person name="Orgebin-Crist M.-C."/>
            <person name="Sendo F."/>
            <person name="Shinkai Y."/>
            <person name="Araki Y."/>
        </authorList>
    </citation>
    <scope>NUCLEOTIDE SEQUENCE [MRNA]</scope>
    <scope>PROTEIN SEQUENCE OF 26-44</scope>
    <scope>SUBCELLULAR LOCATION</scope>
    <scope>DEVELOPMENTAL STAGE</scope>
    <scope>TISSUE SPECIFICITY</scope>
    <source>
        <tissue>Testis</tissue>
    </source>
</reference>
<reference key="2">
    <citation type="journal article" date="2005" name="Science">
        <title>The transcriptional landscape of the mammalian genome.</title>
        <authorList>
            <person name="Carninci P."/>
            <person name="Kasukawa T."/>
            <person name="Katayama S."/>
            <person name="Gough J."/>
            <person name="Frith M.C."/>
            <person name="Maeda N."/>
            <person name="Oyama R."/>
            <person name="Ravasi T."/>
            <person name="Lenhard B."/>
            <person name="Wells C."/>
            <person name="Kodzius R."/>
            <person name="Shimokawa K."/>
            <person name="Bajic V.B."/>
            <person name="Brenner S.E."/>
            <person name="Batalov S."/>
            <person name="Forrest A.R."/>
            <person name="Zavolan M."/>
            <person name="Davis M.J."/>
            <person name="Wilming L.G."/>
            <person name="Aidinis V."/>
            <person name="Allen J.E."/>
            <person name="Ambesi-Impiombato A."/>
            <person name="Apweiler R."/>
            <person name="Aturaliya R.N."/>
            <person name="Bailey T.L."/>
            <person name="Bansal M."/>
            <person name="Baxter L."/>
            <person name="Beisel K.W."/>
            <person name="Bersano T."/>
            <person name="Bono H."/>
            <person name="Chalk A.M."/>
            <person name="Chiu K.P."/>
            <person name="Choudhary V."/>
            <person name="Christoffels A."/>
            <person name="Clutterbuck D.R."/>
            <person name="Crowe M.L."/>
            <person name="Dalla E."/>
            <person name="Dalrymple B.P."/>
            <person name="de Bono B."/>
            <person name="Della Gatta G."/>
            <person name="di Bernardo D."/>
            <person name="Down T."/>
            <person name="Engstrom P."/>
            <person name="Fagiolini M."/>
            <person name="Faulkner G."/>
            <person name="Fletcher C.F."/>
            <person name="Fukushima T."/>
            <person name="Furuno M."/>
            <person name="Futaki S."/>
            <person name="Gariboldi M."/>
            <person name="Georgii-Hemming P."/>
            <person name="Gingeras T.R."/>
            <person name="Gojobori T."/>
            <person name="Green R.E."/>
            <person name="Gustincich S."/>
            <person name="Harbers M."/>
            <person name="Hayashi Y."/>
            <person name="Hensch T.K."/>
            <person name="Hirokawa N."/>
            <person name="Hill D."/>
            <person name="Huminiecki L."/>
            <person name="Iacono M."/>
            <person name="Ikeo K."/>
            <person name="Iwama A."/>
            <person name="Ishikawa T."/>
            <person name="Jakt M."/>
            <person name="Kanapin A."/>
            <person name="Katoh M."/>
            <person name="Kawasawa Y."/>
            <person name="Kelso J."/>
            <person name="Kitamura H."/>
            <person name="Kitano H."/>
            <person name="Kollias G."/>
            <person name="Krishnan S.P."/>
            <person name="Kruger A."/>
            <person name="Kummerfeld S.K."/>
            <person name="Kurochkin I.V."/>
            <person name="Lareau L.F."/>
            <person name="Lazarevic D."/>
            <person name="Lipovich L."/>
            <person name="Liu J."/>
            <person name="Liuni S."/>
            <person name="McWilliam S."/>
            <person name="Madan Babu M."/>
            <person name="Madera M."/>
            <person name="Marchionni L."/>
            <person name="Matsuda H."/>
            <person name="Matsuzawa S."/>
            <person name="Miki H."/>
            <person name="Mignone F."/>
            <person name="Miyake S."/>
            <person name="Morris K."/>
            <person name="Mottagui-Tabar S."/>
            <person name="Mulder N."/>
            <person name="Nakano N."/>
            <person name="Nakauchi H."/>
            <person name="Ng P."/>
            <person name="Nilsson R."/>
            <person name="Nishiguchi S."/>
            <person name="Nishikawa S."/>
            <person name="Nori F."/>
            <person name="Ohara O."/>
            <person name="Okazaki Y."/>
            <person name="Orlando V."/>
            <person name="Pang K.C."/>
            <person name="Pavan W.J."/>
            <person name="Pavesi G."/>
            <person name="Pesole G."/>
            <person name="Petrovsky N."/>
            <person name="Piazza S."/>
            <person name="Reed J."/>
            <person name="Reid J.F."/>
            <person name="Ring B.Z."/>
            <person name="Ringwald M."/>
            <person name="Rost B."/>
            <person name="Ruan Y."/>
            <person name="Salzberg S.L."/>
            <person name="Sandelin A."/>
            <person name="Schneider C."/>
            <person name="Schoenbach C."/>
            <person name="Sekiguchi K."/>
            <person name="Semple C.A."/>
            <person name="Seno S."/>
            <person name="Sessa L."/>
            <person name="Sheng Y."/>
            <person name="Shibata Y."/>
            <person name="Shimada H."/>
            <person name="Shimada K."/>
            <person name="Silva D."/>
            <person name="Sinclair B."/>
            <person name="Sperling S."/>
            <person name="Stupka E."/>
            <person name="Sugiura K."/>
            <person name="Sultana R."/>
            <person name="Takenaka Y."/>
            <person name="Taki K."/>
            <person name="Tammoja K."/>
            <person name="Tan S.L."/>
            <person name="Tang S."/>
            <person name="Taylor M.S."/>
            <person name="Tegner J."/>
            <person name="Teichmann S.A."/>
            <person name="Ueda H.R."/>
            <person name="van Nimwegen E."/>
            <person name="Verardo R."/>
            <person name="Wei C.L."/>
            <person name="Yagi K."/>
            <person name="Yamanishi H."/>
            <person name="Zabarovsky E."/>
            <person name="Zhu S."/>
            <person name="Zimmer A."/>
            <person name="Hide W."/>
            <person name="Bult C."/>
            <person name="Grimmond S.M."/>
            <person name="Teasdale R.D."/>
            <person name="Liu E.T."/>
            <person name="Brusic V."/>
            <person name="Quackenbush J."/>
            <person name="Wahlestedt C."/>
            <person name="Mattick J.S."/>
            <person name="Hume D.A."/>
            <person name="Kai C."/>
            <person name="Sasaki D."/>
            <person name="Tomaru Y."/>
            <person name="Fukuda S."/>
            <person name="Kanamori-Katayama M."/>
            <person name="Suzuki M."/>
            <person name="Aoki J."/>
            <person name="Arakawa T."/>
            <person name="Iida J."/>
            <person name="Imamura K."/>
            <person name="Itoh M."/>
            <person name="Kato T."/>
            <person name="Kawaji H."/>
            <person name="Kawagashira N."/>
            <person name="Kawashima T."/>
            <person name="Kojima M."/>
            <person name="Kondo S."/>
            <person name="Konno H."/>
            <person name="Nakano K."/>
            <person name="Ninomiya N."/>
            <person name="Nishio T."/>
            <person name="Okada M."/>
            <person name="Plessy C."/>
            <person name="Shibata K."/>
            <person name="Shiraki T."/>
            <person name="Suzuki S."/>
            <person name="Tagami M."/>
            <person name="Waki K."/>
            <person name="Watahiki A."/>
            <person name="Okamura-Oho Y."/>
            <person name="Suzuki H."/>
            <person name="Kawai J."/>
            <person name="Hayashizaki Y."/>
        </authorList>
    </citation>
    <scope>NUCLEOTIDE SEQUENCE [LARGE SCALE MRNA]</scope>
    <source>
        <strain>C57BL/6J</strain>
        <tissue>Testis</tissue>
    </source>
</reference>
<reference key="3">
    <citation type="journal article" date="2004" name="Genome Res.">
        <title>The status, quality, and expansion of the NIH full-length cDNA project: the Mammalian Gene Collection (MGC).</title>
        <authorList>
            <consortium name="The MGC Project Team"/>
        </authorList>
    </citation>
    <scope>NUCLEOTIDE SEQUENCE [LARGE SCALE MRNA]</scope>
    <source>
        <tissue>Testis</tissue>
    </source>
</reference>
<reference key="4">
    <citation type="journal article" date="2005" name="Biol. Reprod.">
        <title>Sexually dimorphic expression of the novel germ cell antigen TEX101 during mouse gonad development.</title>
        <authorList>
            <person name="Takayama T."/>
            <person name="Mishima T."/>
            <person name="Mori M."/>
            <person name="Jin H."/>
            <person name="Tsukamoto H."/>
            <person name="Takahashi K."/>
            <person name="Takizawa T."/>
            <person name="Kinoshita K."/>
            <person name="Suzuki M."/>
            <person name="Sato I."/>
            <person name="Matsubara S."/>
            <person name="Araki Y."/>
            <person name="Takizawa T."/>
        </authorList>
    </citation>
    <scope>TISSUE SPECIFICITY</scope>
    <scope>DEVELOPMENTAL STAGE</scope>
</reference>
<reference key="5">
    <citation type="journal article" date="2005" name="Biol. Reprod.">
        <title>Isolation and proteomic analysis of mouse sperm detergent-resistant membrane fractions: evidence for dissociation of lipid rafts during capacitation.</title>
        <authorList>
            <person name="Sleight S.B."/>
            <person name="Miranda P.V."/>
            <person name="Plaskett N.-W."/>
            <person name="Maier B."/>
            <person name="Lysiak J."/>
            <person name="Scrable H."/>
            <person name="Herr J.C."/>
            <person name="Visconti P.E."/>
        </authorList>
    </citation>
    <scope>SUBCELLULAR LOCATION</scope>
    <scope>IDENTIFICATION BY MASS SPECTROMETRY</scope>
    <scope>TISSUE SPECIFICITY</scope>
</reference>
<reference key="6">
    <citation type="journal article" date="2005" name="Zygote">
        <title>TEX101 is shed from the surface of sperm located in the caput epididymidis of the mouse.</title>
        <authorList>
            <person name="Takayama T."/>
            <person name="Mishima T."/>
            <person name="Mori M."/>
            <person name="Ishikawa T."/>
            <person name="Takizawa T."/>
            <person name="Goto T."/>
            <person name="Suzuki M."/>
            <person name="Araki Y."/>
            <person name="Matsubara S."/>
            <person name="Takizawa T."/>
        </authorList>
    </citation>
    <scope>SUBCELLULAR LOCATION</scope>
    <scope>DEVELOPMENTAL STAGE</scope>
    <scope>TISSUE SPECIFICITY</scope>
    <scope>SHEDDING</scope>
</reference>
<reference key="7">
    <citation type="journal article" date="2006" name="Biochem. Biophys. Res. Commun.">
        <title>Testicular proteins associated with the germ cell-marker, TEX101: involvement of cellubrevin in TEX101-trafficking to the cell surface during spermatogenesis.</title>
        <authorList>
            <person name="Tsukamoto H."/>
            <person name="Yoshitake H."/>
            <person name="Mori M."/>
            <person name="Yanagida M."/>
            <person name="Takamori K."/>
            <person name="Ogawa H."/>
            <person name="Takizawa T."/>
            <person name="Araki Y."/>
        </authorList>
    </citation>
    <scope>INTERACTION WITH VAMP3</scope>
    <scope>IDENTIFICATION BY MASS SPECTROMETRY</scope>
    <scope>DEVELOPMENTAL STAGE</scope>
    <scope>SUBCELLULAR LOCATION</scope>
</reference>
<reference key="8">
    <citation type="journal article" date="2006" name="Zygote">
        <title>Molecular characterization of a germ-cell-specific antigen, TEX101, from mouse testis.</title>
        <authorList>
            <person name="Jin H."/>
            <person name="Yoshitake H."/>
            <person name="Tsukamoto H."/>
            <person name="Takahashi M."/>
            <person name="Mori M."/>
            <person name="Takizawa T."/>
            <person name="Takamori K."/>
            <person name="Ogawa H."/>
            <person name="Kinoshita K."/>
            <person name="Araki Y."/>
        </authorList>
    </citation>
    <scope>GLYCOSYLATION</scope>
    <scope>TOPOLOGY</scope>
</reference>
<reference key="9">
    <citation type="journal article" date="2008" name="Biochem. Biophys. Res. Commun.">
        <title>TEX101, a germ cell-marker glycoprotein, is associated with lymphocyte antigen 6 complex locus k within the mouse testis.</title>
        <authorList>
            <person name="Yoshitake H."/>
            <person name="Tsukamoto H."/>
            <person name="Maruyama-Fukushima M."/>
            <person name="Takamori K."/>
            <person name="Ogawa H."/>
            <person name="Araki Y."/>
        </authorList>
    </citation>
    <scope>SUBCELLULAR LOCATION</scope>
    <scope>INTERACTION WITH LY6K</scope>
</reference>
<reference key="10">
    <citation type="journal article" date="2008" name="J. Reprod. Immunol.">
        <title>Molecular diversity of TEX101, a marker glycoprotein for germ cells monitored with monoclonal antibodies: variety of the molecular characteristics according to subcellular localization within the mouse testis.</title>
        <authorList>
            <person name="Yoshitake H."/>
            <person name="Shirai Y."/>
            <person name="Mochizuki Y."/>
            <person name="Iwanari H."/>
            <person name="Tsubamoto H."/>
            <person name="Koyama K."/>
            <person name="Takamori K."/>
            <person name="Ogawa H."/>
            <person name="Hasegawa A."/>
            <person name="Kodama T."/>
            <person name="Hamakubo T."/>
            <person name="Araki Y."/>
        </authorList>
    </citation>
    <scope>TISSUE SPECIFICITY</scope>
    <scope>SUBCELLULAR LOCATION</scope>
    <scope>GLYCOSYLATION</scope>
</reference>
<reference key="11">
    <citation type="journal article" date="2010" name="Cell">
        <title>A tissue-specific atlas of mouse protein phosphorylation and expression.</title>
        <authorList>
            <person name="Huttlin E.L."/>
            <person name="Jedrychowski M.P."/>
            <person name="Elias J.E."/>
            <person name="Goswami T."/>
            <person name="Rad R."/>
            <person name="Beausoleil S.A."/>
            <person name="Villen J."/>
            <person name="Haas W."/>
            <person name="Sowa M.E."/>
            <person name="Gygi S.P."/>
        </authorList>
    </citation>
    <scope>IDENTIFICATION BY MASS SPECTROMETRY [LARGE SCALE ANALYSIS]</scope>
    <source>
        <tissue>Testis</tissue>
    </source>
</reference>
<reference key="12">
    <citation type="journal article" date="2011" name="J. Reprod. Immunol.">
        <title>Molecular characterization and expression of dipeptidase 3, a testis-specific membrane-bound dipeptidase: complex formation with TEX101, a germ-cell-specific antigen in the mouse testis.</title>
        <authorList>
            <person name="Yoshitake H."/>
            <person name="Yanagida M."/>
            <person name="Maruyama M."/>
            <person name="Takamori K."/>
            <person name="Hasegawa A."/>
            <person name="Araki Y."/>
        </authorList>
    </citation>
    <scope>SUBCELLULAR LOCATION</scope>
    <scope>INTERACTION WITH DPEP3</scope>
</reference>
<reference key="13">
    <citation type="journal article" date="2013" name="J. Mol. Cell Biol.">
        <title>Tex101 is essential for male fertility by affecting sperm migration into the oviduct in mice.</title>
        <authorList>
            <person name="Li W."/>
            <person name="Guo X.J."/>
            <person name="Teng F."/>
            <person name="Hou X.J."/>
            <person name="Lv Z."/>
            <person name="Zhou S.Y."/>
            <person name="Bi Y."/>
            <person name="Wan H.F."/>
            <person name="Feng C.J."/>
            <person name="Yuan Y."/>
            <person name="Zhao X.Y."/>
            <person name="Wang L."/>
            <person name="Sha J.H."/>
            <person name="Zhou Q."/>
        </authorList>
    </citation>
    <scope>TISSUE SPECIFICITY</scope>
    <scope>DISRUPTION PHENOTYPE</scope>
    <scope>INTERACTION WITH ADAM3 AND ADAM5</scope>
    <scope>FUNCTION</scope>
</reference>
<reference key="14">
    <citation type="journal article" date="2013" name="Proc. Natl. Acad. Sci. U.S.A.">
        <title>Expression of TEX101, regulated by ACE, is essential for the production of fertile mouse spermatozoa.</title>
        <authorList>
            <person name="Fujihara Y."/>
            <person name="Tokuhiro K."/>
            <person name="Muro Y."/>
            <person name="Kondoh G."/>
            <person name="Araki Y."/>
            <person name="Ikawa M."/>
            <person name="Okabe M."/>
        </authorList>
    </citation>
    <scope>TISSUE SPECIFICITY</scope>
    <scope>INTERACTION WITH ADAM3</scope>
    <scope>SHEDDING</scope>
    <scope>FUNCTION</scope>
</reference>
<reference key="15">
    <citation type="journal article" date="2014" name="Biol. Reprod.">
        <title>GPI-anchored protein complex, LY6K/TEX101, is required for sperm migration into the oviduct and male fertility in mice.</title>
        <authorList>
            <person name="Fujihara Y."/>
            <person name="Okabe M."/>
            <person name="Ikawa M."/>
        </authorList>
    </citation>
    <scope>SHEDDING</scope>
</reference>
<reference key="16">
    <citation type="journal article" date="2016" name="Sci. Rep.">
        <title>TEX101, a glycoprotein essential for sperm fertility, is required for stable expression of Ly6k on testicular germ cells.</title>
        <authorList>
            <person name="Endo S."/>
            <person name="Yoshitake H."/>
            <person name="Tsukamoto H."/>
            <person name="Matsuura H."/>
            <person name="Kato K."/>
            <person name="Sakuraba M."/>
            <person name="Takamori K."/>
            <person name="Fujiwara H."/>
            <person name="Takeda S."/>
            <person name="Araki Y."/>
        </authorList>
    </citation>
    <scope>SUBCELLULAR LOCATION</scope>
</reference>
<evidence type="ECO:0000250" key="1">
    <source>
        <dbReference type="UniProtKB" id="Q924B5"/>
    </source>
</evidence>
<evidence type="ECO:0000250" key="2">
    <source>
        <dbReference type="UniProtKB" id="Q9BY14"/>
    </source>
</evidence>
<evidence type="ECO:0000255" key="3"/>
<evidence type="ECO:0000269" key="4">
    <source>
    </source>
</evidence>
<evidence type="ECO:0000269" key="5">
    <source>
    </source>
</evidence>
<evidence type="ECO:0000269" key="6">
    <source>
    </source>
</evidence>
<evidence type="ECO:0000269" key="7">
    <source>
    </source>
</evidence>
<evidence type="ECO:0000269" key="8">
    <source>
    </source>
</evidence>
<evidence type="ECO:0000269" key="9">
    <source>
    </source>
</evidence>
<evidence type="ECO:0000269" key="10">
    <source>
    </source>
</evidence>
<evidence type="ECO:0000269" key="11">
    <source>
    </source>
</evidence>
<evidence type="ECO:0000269" key="12">
    <source>
    </source>
</evidence>
<evidence type="ECO:0000269" key="13">
    <source>
    </source>
</evidence>
<evidence type="ECO:0000269" key="14">
    <source>
    </source>
</evidence>
<evidence type="ECO:0000269" key="15">
    <source>
    </source>
</evidence>
<evidence type="ECO:0000269" key="16">
    <source>
    </source>
</evidence>
<evidence type="ECO:0000312" key="17">
    <source>
        <dbReference type="MGI" id="MGI:1930791"/>
    </source>
</evidence>
<evidence type="ECO:0007829" key="18">
    <source>
        <dbReference type="PDB" id="7BPS"/>
    </source>
</evidence>
<organism>
    <name type="scientific">Mus musculus</name>
    <name type="common">Mouse</name>
    <dbReference type="NCBI Taxonomy" id="10090"/>
    <lineage>
        <taxon>Eukaryota</taxon>
        <taxon>Metazoa</taxon>
        <taxon>Chordata</taxon>
        <taxon>Craniata</taxon>
        <taxon>Vertebrata</taxon>
        <taxon>Euteleostomi</taxon>
        <taxon>Mammalia</taxon>
        <taxon>Eutheria</taxon>
        <taxon>Euarchontoglires</taxon>
        <taxon>Glires</taxon>
        <taxon>Rodentia</taxon>
        <taxon>Myomorpha</taxon>
        <taxon>Muroidea</taxon>
        <taxon>Muridae</taxon>
        <taxon>Murinae</taxon>
        <taxon>Mus</taxon>
        <taxon>Mus</taxon>
    </lineage>
</organism>
<dbReference type="EMBL" id="AB022914">
    <property type="protein sequence ID" value="BAA90265.1"/>
    <property type="molecule type" value="mRNA"/>
</dbReference>
<dbReference type="EMBL" id="BC048475">
    <property type="protein sequence ID" value="AAH48475.1"/>
    <property type="molecule type" value="mRNA"/>
</dbReference>
<dbReference type="EMBL" id="AK005769">
    <property type="protein sequence ID" value="BAB24228.1"/>
    <property type="molecule type" value="mRNA"/>
</dbReference>
<dbReference type="CCDS" id="CCDS20959.1"/>
<dbReference type="RefSeq" id="NP_064365.1">
    <property type="nucleotide sequence ID" value="NM_019981.2"/>
</dbReference>
<dbReference type="PDB" id="7BPS">
    <property type="method" value="X-ray"/>
    <property type="resolution" value="2.35 A"/>
    <property type="chains" value="A/B=26-224"/>
</dbReference>
<dbReference type="PDBsum" id="7BPS"/>
<dbReference type="SMR" id="Q9JMI7"/>
<dbReference type="FunCoup" id="Q9JMI7">
    <property type="interactions" value="36"/>
</dbReference>
<dbReference type="STRING" id="10090.ENSMUSP00000077150"/>
<dbReference type="GlyCosmos" id="Q9JMI7">
    <property type="glycosylation" value="4 sites, No reported glycans"/>
</dbReference>
<dbReference type="GlyGen" id="Q9JMI7">
    <property type="glycosylation" value="4 sites"/>
</dbReference>
<dbReference type="PhosphoSitePlus" id="Q9JMI7"/>
<dbReference type="SwissPalm" id="Q9JMI7"/>
<dbReference type="PaxDb" id="10090-ENSMUSP00000077150"/>
<dbReference type="PeptideAtlas" id="Q9JMI7"/>
<dbReference type="ProteomicsDB" id="298439"/>
<dbReference type="Antibodypedia" id="31041">
    <property type="antibodies" value="45 antibodies from 18 providers"/>
</dbReference>
<dbReference type="DNASU" id="56746"/>
<dbReference type="Ensembl" id="ENSMUST00000078001.7">
    <property type="protein sequence ID" value="ENSMUSP00000077150.6"/>
    <property type="gene ID" value="ENSMUSG00000062773.7"/>
</dbReference>
<dbReference type="GeneID" id="56746"/>
<dbReference type="KEGG" id="mmu:56746"/>
<dbReference type="UCSC" id="uc009fqf.1">
    <property type="organism name" value="mouse"/>
</dbReference>
<dbReference type="AGR" id="MGI:1930791"/>
<dbReference type="CTD" id="83639"/>
<dbReference type="MGI" id="MGI:1930791">
    <property type="gene designation" value="Tex101"/>
</dbReference>
<dbReference type="VEuPathDB" id="HostDB:ENSMUSG00000062773"/>
<dbReference type="eggNOG" id="ENOG502T90B">
    <property type="taxonomic scope" value="Eukaryota"/>
</dbReference>
<dbReference type="GeneTree" id="ENSGT00530000063351"/>
<dbReference type="HOGENOM" id="CLU_077973_0_0_1"/>
<dbReference type="InParanoid" id="Q9JMI7"/>
<dbReference type="OMA" id="QETVLMI"/>
<dbReference type="OrthoDB" id="9443273at2759"/>
<dbReference type="PhylomeDB" id="Q9JMI7"/>
<dbReference type="TreeFam" id="TF337286"/>
<dbReference type="Reactome" id="R-MMU-163125">
    <property type="pathway name" value="Post-translational modification: synthesis of GPI-anchored proteins"/>
</dbReference>
<dbReference type="BioGRID-ORCS" id="56746">
    <property type="hits" value="0 hits in 76 CRISPR screens"/>
</dbReference>
<dbReference type="PRO" id="PR:Q9JMI7"/>
<dbReference type="Proteomes" id="UP000000589">
    <property type="component" value="Chromosome 7"/>
</dbReference>
<dbReference type="RNAct" id="Q9JMI7">
    <property type="molecule type" value="protein"/>
</dbReference>
<dbReference type="Bgee" id="ENSMUSG00000062773">
    <property type="expression patterns" value="Expressed in spermatocyte and 28 other cell types or tissues"/>
</dbReference>
<dbReference type="ExpressionAtlas" id="Q9JMI7">
    <property type="expression patterns" value="baseline and differential"/>
</dbReference>
<dbReference type="GO" id="GO:0002080">
    <property type="term" value="C:acrosomal membrane"/>
    <property type="evidence" value="ECO:0000314"/>
    <property type="project" value="MGI"/>
</dbReference>
<dbReference type="GO" id="GO:0001669">
    <property type="term" value="C:acrosomal vesicle"/>
    <property type="evidence" value="ECO:0000314"/>
    <property type="project" value="UniProtKB"/>
</dbReference>
<dbReference type="GO" id="GO:0005576">
    <property type="term" value="C:extracellular region"/>
    <property type="evidence" value="ECO:0000314"/>
    <property type="project" value="UniProtKB"/>
</dbReference>
<dbReference type="GO" id="GO:0045121">
    <property type="term" value="C:membrane raft"/>
    <property type="evidence" value="ECO:0007669"/>
    <property type="project" value="UniProtKB-SubCell"/>
</dbReference>
<dbReference type="GO" id="GO:0005886">
    <property type="term" value="C:plasma membrane"/>
    <property type="evidence" value="ECO:0000314"/>
    <property type="project" value="UniProtKB"/>
</dbReference>
<dbReference type="GO" id="GO:0098552">
    <property type="term" value="C:side of membrane"/>
    <property type="evidence" value="ECO:0007669"/>
    <property type="project" value="UniProtKB-KW"/>
</dbReference>
<dbReference type="GO" id="GO:0007339">
    <property type="term" value="P:binding of sperm to zona pellucida"/>
    <property type="evidence" value="ECO:0000315"/>
    <property type="project" value="UniProtKB"/>
</dbReference>
<dbReference type="GO" id="GO:0009566">
    <property type="term" value="P:fertilization"/>
    <property type="evidence" value="ECO:0000315"/>
    <property type="project" value="UniProtKB"/>
</dbReference>
<dbReference type="GO" id="GO:0030317">
    <property type="term" value="P:flagellated sperm motility"/>
    <property type="evidence" value="ECO:0000315"/>
    <property type="project" value="UniProtKB"/>
</dbReference>
<dbReference type="GO" id="GO:1901317">
    <property type="term" value="P:regulation of flagellated sperm motility"/>
    <property type="evidence" value="ECO:0000315"/>
    <property type="project" value="UniProtKB"/>
</dbReference>
<dbReference type="CDD" id="cd23622">
    <property type="entry name" value="TFP_LU_ECD_TEX101_rpt1"/>
    <property type="match status" value="1"/>
</dbReference>
<dbReference type="CDD" id="cd23634">
    <property type="entry name" value="TFP_LU_ECD_TEX101_rpt2"/>
    <property type="match status" value="1"/>
</dbReference>
<dbReference type="InterPro" id="IPR051899">
    <property type="entry name" value="Fert-Immune_med_protein"/>
</dbReference>
<dbReference type="InterPro" id="IPR016054">
    <property type="entry name" value="LY6_UPA_recep-like"/>
</dbReference>
<dbReference type="PANTHER" id="PTHR16529">
    <property type="entry name" value="CD177 ANTIGEN"/>
    <property type="match status" value="1"/>
</dbReference>
<dbReference type="PANTHER" id="PTHR16529:SF8">
    <property type="entry name" value="CD177 ANTIGEN"/>
    <property type="match status" value="1"/>
</dbReference>
<dbReference type="Pfam" id="PF00021">
    <property type="entry name" value="UPAR_LY6"/>
    <property type="match status" value="2"/>
</dbReference>